<geneLocation type="plastid"/>
<name>RR8_CUSRE</name>
<proteinExistence type="inferred from homology"/>
<feature type="chain" id="PRO_0000322029" description="Small ribosomal subunit protein uS8c">
    <location>
        <begin position="1"/>
        <end position="134"/>
    </location>
</feature>
<accession>A7M998</accession>
<keyword id="KW-0934">Plastid</keyword>
<keyword id="KW-0687">Ribonucleoprotein</keyword>
<keyword id="KW-0689">Ribosomal protein</keyword>
<keyword id="KW-0694">RNA-binding</keyword>
<keyword id="KW-0699">rRNA-binding</keyword>
<reference key="1">
    <citation type="journal article" date="2007" name="BMC Plant Biol.">
        <title>Complete DNA sequences of the plastid genomes of two parasitic flowering plant species, Cuscuta reflexa and Cuscuta gronovii.</title>
        <authorList>
            <person name="Funk H.T."/>
            <person name="Berg S."/>
            <person name="Krupinska K."/>
            <person name="Maier U.-G."/>
            <person name="Krause K."/>
        </authorList>
    </citation>
    <scope>NUCLEOTIDE SEQUENCE [LARGE SCALE GENOMIC DNA]</scope>
</reference>
<comment type="function">
    <text evidence="1">One of the primary rRNA binding proteins, it binds directly to 16S rRNA central domain where it helps coordinate assembly of the platform of the 30S subunit.</text>
</comment>
<comment type="subunit">
    <text evidence="1">Part of the 30S ribosomal subunit.</text>
</comment>
<comment type="subcellular location">
    <subcellularLocation>
        <location>Plastid</location>
    </subcellularLocation>
</comment>
<comment type="similarity">
    <text evidence="2">Belongs to the universal ribosomal protein uS8 family.</text>
</comment>
<evidence type="ECO:0000250" key="1"/>
<evidence type="ECO:0000305" key="2"/>
<organism>
    <name type="scientific">Cuscuta reflexa</name>
    <name type="common">Southern Asian dodder</name>
    <dbReference type="NCBI Taxonomy" id="4129"/>
    <lineage>
        <taxon>Eukaryota</taxon>
        <taxon>Viridiplantae</taxon>
        <taxon>Streptophyta</taxon>
        <taxon>Embryophyta</taxon>
        <taxon>Tracheophyta</taxon>
        <taxon>Spermatophyta</taxon>
        <taxon>Magnoliopsida</taxon>
        <taxon>eudicotyledons</taxon>
        <taxon>Gunneridae</taxon>
        <taxon>Pentapetalae</taxon>
        <taxon>asterids</taxon>
        <taxon>lamiids</taxon>
        <taxon>Solanales</taxon>
        <taxon>Convolvulaceae</taxon>
        <taxon>Cuscuteae</taxon>
        <taxon>Cuscuta</taxon>
        <taxon>Cuscuta subgen. Monogynella</taxon>
    </lineage>
</organism>
<protein>
    <recommendedName>
        <fullName evidence="2">Small ribosomal subunit protein uS8c</fullName>
    </recommendedName>
    <alternativeName>
        <fullName>30S ribosomal protein S8, plastid</fullName>
    </alternativeName>
</protein>
<gene>
    <name type="primary">rps8</name>
</gene>
<dbReference type="EMBL" id="AM711640">
    <property type="protein sequence ID" value="CAM98426.1"/>
    <property type="molecule type" value="Genomic_DNA"/>
</dbReference>
<dbReference type="RefSeq" id="YP_001430139.1">
    <property type="nucleotide sequence ID" value="NC_009766.1"/>
</dbReference>
<dbReference type="SMR" id="A7M998"/>
<dbReference type="GeneID" id="5536686"/>
<dbReference type="GO" id="GO:0009536">
    <property type="term" value="C:plastid"/>
    <property type="evidence" value="ECO:0007669"/>
    <property type="project" value="UniProtKB-SubCell"/>
</dbReference>
<dbReference type="GO" id="GO:1990904">
    <property type="term" value="C:ribonucleoprotein complex"/>
    <property type="evidence" value="ECO:0007669"/>
    <property type="project" value="UniProtKB-KW"/>
</dbReference>
<dbReference type="GO" id="GO:0005840">
    <property type="term" value="C:ribosome"/>
    <property type="evidence" value="ECO:0007669"/>
    <property type="project" value="UniProtKB-KW"/>
</dbReference>
<dbReference type="GO" id="GO:0019843">
    <property type="term" value="F:rRNA binding"/>
    <property type="evidence" value="ECO:0007669"/>
    <property type="project" value="UniProtKB-KW"/>
</dbReference>
<dbReference type="GO" id="GO:0003735">
    <property type="term" value="F:structural constituent of ribosome"/>
    <property type="evidence" value="ECO:0007669"/>
    <property type="project" value="InterPro"/>
</dbReference>
<dbReference type="GO" id="GO:0006412">
    <property type="term" value="P:translation"/>
    <property type="evidence" value="ECO:0007669"/>
    <property type="project" value="InterPro"/>
</dbReference>
<dbReference type="FunFam" id="3.30.1490.10:FF:000001">
    <property type="entry name" value="30S ribosomal protein S8"/>
    <property type="match status" value="1"/>
</dbReference>
<dbReference type="Gene3D" id="3.30.1370.30">
    <property type="match status" value="1"/>
</dbReference>
<dbReference type="Gene3D" id="3.30.1490.10">
    <property type="match status" value="1"/>
</dbReference>
<dbReference type="HAMAP" id="MF_01302_B">
    <property type="entry name" value="Ribosomal_uS8_B"/>
    <property type="match status" value="1"/>
</dbReference>
<dbReference type="InterPro" id="IPR000630">
    <property type="entry name" value="Ribosomal_uS8"/>
</dbReference>
<dbReference type="InterPro" id="IPR047863">
    <property type="entry name" value="Ribosomal_uS8_CS"/>
</dbReference>
<dbReference type="InterPro" id="IPR035987">
    <property type="entry name" value="Ribosomal_uS8_sf"/>
</dbReference>
<dbReference type="NCBIfam" id="NF001109">
    <property type="entry name" value="PRK00136.1"/>
    <property type="match status" value="1"/>
</dbReference>
<dbReference type="PANTHER" id="PTHR11758">
    <property type="entry name" value="40S RIBOSOMAL PROTEIN S15A"/>
    <property type="match status" value="1"/>
</dbReference>
<dbReference type="Pfam" id="PF00410">
    <property type="entry name" value="Ribosomal_S8"/>
    <property type="match status" value="1"/>
</dbReference>
<dbReference type="SUPFAM" id="SSF56047">
    <property type="entry name" value="Ribosomal protein S8"/>
    <property type="match status" value="1"/>
</dbReference>
<dbReference type="PROSITE" id="PS00053">
    <property type="entry name" value="RIBOSOMAL_S8"/>
    <property type="match status" value="1"/>
</dbReference>
<sequence length="134" mass="15785">MGRDTIAEIITSIRNADMDRKRVVRIASTHITENIVKLLLREGFFENVRKHRENNKNFFVLTLRHRRNKKRPLRNILKLKRISRPGLRIYYKSQKIPRILGGMGVIIISTSRGIMTDREARLEGIGGEILFYIW</sequence>